<dbReference type="EMBL" id="CP000151">
    <property type="protein sequence ID" value="ABB07686.1"/>
    <property type="molecule type" value="Genomic_DNA"/>
</dbReference>
<dbReference type="RefSeq" id="WP_006486661.1">
    <property type="nucleotide sequence ID" value="NZ_WNDV01000014.1"/>
</dbReference>
<dbReference type="SMR" id="Q39IN0"/>
<dbReference type="GeneID" id="98102632"/>
<dbReference type="KEGG" id="bur:Bcep18194_A4089"/>
<dbReference type="HOGENOM" id="CLU_137929_2_1_4"/>
<dbReference type="Proteomes" id="UP000002705">
    <property type="component" value="Chromosome 1"/>
</dbReference>
<dbReference type="GO" id="GO:0051301">
    <property type="term" value="P:cell division"/>
    <property type="evidence" value="ECO:0007669"/>
    <property type="project" value="UniProtKB-KW"/>
</dbReference>
<dbReference type="GO" id="GO:0032955">
    <property type="term" value="P:regulation of division septum assembly"/>
    <property type="evidence" value="ECO:0007669"/>
    <property type="project" value="InterPro"/>
</dbReference>
<dbReference type="FunFam" id="3.30.1070.10:FF:000001">
    <property type="entry name" value="Cell division topological specificity factor"/>
    <property type="match status" value="1"/>
</dbReference>
<dbReference type="Gene3D" id="3.30.1070.10">
    <property type="entry name" value="Cell division topological specificity factor MinE"/>
    <property type="match status" value="1"/>
</dbReference>
<dbReference type="HAMAP" id="MF_00262">
    <property type="entry name" value="MinE"/>
    <property type="match status" value="1"/>
</dbReference>
<dbReference type="InterPro" id="IPR005527">
    <property type="entry name" value="MinE"/>
</dbReference>
<dbReference type="InterPro" id="IPR036707">
    <property type="entry name" value="MinE_sf"/>
</dbReference>
<dbReference type="NCBIfam" id="TIGR01215">
    <property type="entry name" value="minE"/>
    <property type="match status" value="1"/>
</dbReference>
<dbReference type="NCBIfam" id="NF001422">
    <property type="entry name" value="PRK00296.1"/>
    <property type="match status" value="1"/>
</dbReference>
<dbReference type="NCBIfam" id="NF010595">
    <property type="entry name" value="PRK13989.1"/>
    <property type="match status" value="1"/>
</dbReference>
<dbReference type="Pfam" id="PF03776">
    <property type="entry name" value="MinE"/>
    <property type="match status" value="1"/>
</dbReference>
<dbReference type="SUPFAM" id="SSF55229">
    <property type="entry name" value="Cell division protein MinE topological specificity domain"/>
    <property type="match status" value="1"/>
</dbReference>
<accession>Q39IN0</accession>
<organism>
    <name type="scientific">Burkholderia lata (strain ATCC 17760 / DSM 23089 / LMG 22485 / NCIMB 9086 / R18194 / 383)</name>
    <dbReference type="NCBI Taxonomy" id="482957"/>
    <lineage>
        <taxon>Bacteria</taxon>
        <taxon>Pseudomonadati</taxon>
        <taxon>Pseudomonadota</taxon>
        <taxon>Betaproteobacteria</taxon>
        <taxon>Burkholderiales</taxon>
        <taxon>Burkholderiaceae</taxon>
        <taxon>Burkholderia</taxon>
        <taxon>Burkholderia cepacia complex</taxon>
    </lineage>
</organism>
<keyword id="KW-0131">Cell cycle</keyword>
<keyword id="KW-0132">Cell division</keyword>
<name>MINE_BURL3</name>
<gene>
    <name evidence="1" type="primary">minE</name>
    <name type="ordered locus">Bcep18194_A4089</name>
</gene>
<sequence>MSILSFLLGEKKKSASVAKERLQLIIAHERVGGRPPADYLPALQKELVAVISKYVHISNDDIRVSLERQDDLEVLEVKIEIPQA</sequence>
<protein>
    <recommendedName>
        <fullName evidence="1">Cell division topological specificity factor</fullName>
    </recommendedName>
</protein>
<feature type="chain" id="PRO_0000298093" description="Cell division topological specificity factor">
    <location>
        <begin position="1"/>
        <end position="84"/>
    </location>
</feature>
<proteinExistence type="inferred from homology"/>
<comment type="function">
    <text evidence="1">Prevents the cell division inhibition by proteins MinC and MinD at internal division sites while permitting inhibition at polar sites. This ensures cell division at the proper site by restricting the formation of a division septum at the midpoint of the long axis of the cell.</text>
</comment>
<comment type="similarity">
    <text evidence="1">Belongs to the MinE family.</text>
</comment>
<evidence type="ECO:0000255" key="1">
    <source>
        <dbReference type="HAMAP-Rule" id="MF_00262"/>
    </source>
</evidence>
<reference key="1">
    <citation type="submission" date="2005-10" db="EMBL/GenBank/DDBJ databases">
        <title>Complete sequence of chromosome 1 of Burkholderia sp. 383.</title>
        <authorList>
            <consortium name="US DOE Joint Genome Institute"/>
            <person name="Copeland A."/>
            <person name="Lucas S."/>
            <person name="Lapidus A."/>
            <person name="Barry K."/>
            <person name="Detter J.C."/>
            <person name="Glavina T."/>
            <person name="Hammon N."/>
            <person name="Israni S."/>
            <person name="Pitluck S."/>
            <person name="Chain P."/>
            <person name="Malfatti S."/>
            <person name="Shin M."/>
            <person name="Vergez L."/>
            <person name="Schmutz J."/>
            <person name="Larimer F."/>
            <person name="Land M."/>
            <person name="Kyrpides N."/>
            <person name="Lykidis A."/>
            <person name="Richardson P."/>
        </authorList>
    </citation>
    <scope>NUCLEOTIDE SEQUENCE [LARGE SCALE GENOMIC DNA]</scope>
    <source>
        <strain>ATCC 17760 / DSM 23089 / LMG 22485 / NCIMB 9086 / R18194 / 383</strain>
    </source>
</reference>